<evidence type="ECO:0000250" key="1"/>
<evidence type="ECO:0000269" key="2">
    <source>
    </source>
</evidence>
<evidence type="ECO:0000303" key="3">
    <source>
    </source>
</evidence>
<evidence type="ECO:0000305" key="4"/>
<evidence type="ECO:0007829" key="5">
    <source>
        <dbReference type="PDB" id="6CGM"/>
    </source>
</evidence>
<evidence type="ECO:0007829" key="6">
    <source>
        <dbReference type="PDB" id="6CGN"/>
    </source>
</evidence>
<evidence type="ECO:0007829" key="7">
    <source>
        <dbReference type="PDB" id="6MT9"/>
    </source>
</evidence>
<evidence type="ECO:0007829" key="8">
    <source>
        <dbReference type="PDB" id="6MV9"/>
    </source>
</evidence>
<dbReference type="EC" id="1.17.4.1"/>
<dbReference type="EMBL" id="Z68500">
    <property type="protein sequence ID" value="CAA92810.1"/>
    <property type="molecule type" value="Genomic_DNA"/>
</dbReference>
<dbReference type="EMBL" id="AL009126">
    <property type="protein sequence ID" value="CAB13622.1"/>
    <property type="molecule type" value="Genomic_DNA"/>
</dbReference>
<dbReference type="PIR" id="B69667">
    <property type="entry name" value="B69667"/>
</dbReference>
<dbReference type="RefSeq" id="NP_389620.1">
    <property type="nucleotide sequence ID" value="NC_000964.3"/>
</dbReference>
<dbReference type="RefSeq" id="WP_003245700.1">
    <property type="nucleotide sequence ID" value="NZ_OZ025638.1"/>
</dbReference>
<dbReference type="PDB" id="6CGL">
    <property type="method" value="X-ray"/>
    <property type="resolution" value="3.20 A"/>
    <property type="chains" value="A/B=1-700"/>
</dbReference>
<dbReference type="PDB" id="6CGM">
    <property type="method" value="X-ray"/>
    <property type="resolution" value="2.00 A"/>
    <property type="chains" value="A=1-700"/>
</dbReference>
<dbReference type="PDB" id="6CGN">
    <property type="method" value="X-ray"/>
    <property type="resolution" value="2.26 A"/>
    <property type="chains" value="A=1-700"/>
</dbReference>
<dbReference type="PDB" id="6MT9">
    <property type="method" value="X-ray"/>
    <property type="resolution" value="2.50 A"/>
    <property type="chains" value="A=1-700"/>
</dbReference>
<dbReference type="PDB" id="6MV9">
    <property type="method" value="X-ray"/>
    <property type="resolution" value="2.95 A"/>
    <property type="chains" value="A/B=1-700"/>
</dbReference>
<dbReference type="PDB" id="6MVE">
    <property type="method" value="X-ray"/>
    <property type="resolution" value="2.55 A"/>
    <property type="chains" value="A=1-700"/>
</dbReference>
<dbReference type="PDB" id="6MW3">
    <property type="method" value="EM"/>
    <property type="resolution" value="4.65 A"/>
    <property type="chains" value="C/D=1-700"/>
</dbReference>
<dbReference type="PDB" id="6MYX">
    <property type="method" value="EM"/>
    <property type="resolution" value="6.00 A"/>
    <property type="chains" value="C/D/I/J=1-700"/>
</dbReference>
<dbReference type="PDBsum" id="6CGL"/>
<dbReference type="PDBsum" id="6CGM"/>
<dbReference type="PDBsum" id="6CGN"/>
<dbReference type="PDBsum" id="6MT9"/>
<dbReference type="PDBsum" id="6MV9"/>
<dbReference type="PDBsum" id="6MVE"/>
<dbReference type="PDBsum" id="6MW3"/>
<dbReference type="PDBsum" id="6MYX"/>
<dbReference type="EMDB" id="EMD-9272"/>
<dbReference type="SMR" id="P50620"/>
<dbReference type="FunCoup" id="P50620">
    <property type="interactions" value="542"/>
</dbReference>
<dbReference type="STRING" id="224308.BSU17380"/>
<dbReference type="jPOST" id="P50620"/>
<dbReference type="PaxDb" id="224308-BSU17380"/>
<dbReference type="EnsemblBacteria" id="CAB13622">
    <property type="protein sequence ID" value="CAB13622"/>
    <property type="gene ID" value="BSU_17380"/>
</dbReference>
<dbReference type="GeneID" id="940091"/>
<dbReference type="KEGG" id="bsu:BSU17380"/>
<dbReference type="PATRIC" id="fig|224308.179.peg.1884"/>
<dbReference type="eggNOG" id="COG0209">
    <property type="taxonomic scope" value="Bacteria"/>
</dbReference>
<dbReference type="InParanoid" id="P50620"/>
<dbReference type="OrthoDB" id="9762933at2"/>
<dbReference type="PhylomeDB" id="P50620"/>
<dbReference type="BioCyc" id="BSUB:BSU17380-MONOMER"/>
<dbReference type="Proteomes" id="UP000001570">
    <property type="component" value="Chromosome"/>
</dbReference>
<dbReference type="GO" id="GO:0005971">
    <property type="term" value="C:ribonucleoside-diphosphate reductase complex"/>
    <property type="evidence" value="ECO:0000318"/>
    <property type="project" value="GO_Central"/>
</dbReference>
<dbReference type="GO" id="GO:0005524">
    <property type="term" value="F:ATP binding"/>
    <property type="evidence" value="ECO:0000318"/>
    <property type="project" value="GO_Central"/>
</dbReference>
<dbReference type="GO" id="GO:0004748">
    <property type="term" value="F:ribonucleoside-diphosphate reductase activity, thioredoxin disulfide as acceptor"/>
    <property type="evidence" value="ECO:0000315"/>
    <property type="project" value="CACAO"/>
</dbReference>
<dbReference type="GO" id="GO:0009263">
    <property type="term" value="P:deoxyribonucleotide biosynthetic process"/>
    <property type="evidence" value="ECO:0000318"/>
    <property type="project" value="GO_Central"/>
</dbReference>
<dbReference type="CDD" id="cd01679">
    <property type="entry name" value="RNR_I"/>
    <property type="match status" value="1"/>
</dbReference>
<dbReference type="Gene3D" id="1.10.1650.20">
    <property type="match status" value="1"/>
</dbReference>
<dbReference type="Gene3D" id="3.20.70.20">
    <property type="match status" value="1"/>
</dbReference>
<dbReference type="InterPro" id="IPR013346">
    <property type="entry name" value="NrdE_NrdA_C"/>
</dbReference>
<dbReference type="InterPro" id="IPR026459">
    <property type="entry name" value="RNR_1b_NrdE"/>
</dbReference>
<dbReference type="InterPro" id="IPR000788">
    <property type="entry name" value="RNR_lg_C"/>
</dbReference>
<dbReference type="InterPro" id="IPR013509">
    <property type="entry name" value="RNR_lsu_N"/>
</dbReference>
<dbReference type="InterPro" id="IPR013554">
    <property type="entry name" value="RNR_N"/>
</dbReference>
<dbReference type="InterPro" id="IPR008926">
    <property type="entry name" value="RNR_R1-su_N"/>
</dbReference>
<dbReference type="InterPro" id="IPR039718">
    <property type="entry name" value="Rrm1"/>
</dbReference>
<dbReference type="NCBIfam" id="TIGR02506">
    <property type="entry name" value="NrdE_NrdA"/>
    <property type="match status" value="1"/>
</dbReference>
<dbReference type="NCBIfam" id="TIGR04170">
    <property type="entry name" value="RNR_1b_NrdE"/>
    <property type="match status" value="1"/>
</dbReference>
<dbReference type="PANTHER" id="PTHR11573:SF30">
    <property type="entry name" value="RIBONUCLEOSIDE-DIPHOSPHATE REDUCTASE 2 SUBUNIT ALPHA"/>
    <property type="match status" value="1"/>
</dbReference>
<dbReference type="PANTHER" id="PTHR11573">
    <property type="entry name" value="RIBONUCLEOSIDE-DIPHOSPHATE REDUCTASE LARGE CHAIN"/>
    <property type="match status" value="1"/>
</dbReference>
<dbReference type="Pfam" id="PF02867">
    <property type="entry name" value="Ribonuc_red_lgC"/>
    <property type="match status" value="1"/>
</dbReference>
<dbReference type="Pfam" id="PF00317">
    <property type="entry name" value="Ribonuc_red_lgN"/>
    <property type="match status" value="1"/>
</dbReference>
<dbReference type="Pfam" id="PF08343">
    <property type="entry name" value="RNR_N"/>
    <property type="match status" value="1"/>
</dbReference>
<dbReference type="PRINTS" id="PR01183">
    <property type="entry name" value="RIBORDTASEM1"/>
</dbReference>
<dbReference type="SUPFAM" id="SSF51998">
    <property type="entry name" value="PFL-like glycyl radical enzymes"/>
    <property type="match status" value="1"/>
</dbReference>
<dbReference type="SUPFAM" id="SSF48168">
    <property type="entry name" value="R1 subunit of ribonucleotide reductase, N-terminal domain"/>
    <property type="match status" value="1"/>
</dbReference>
<dbReference type="PROSITE" id="PS00089">
    <property type="entry name" value="RIBORED_LARGE"/>
    <property type="match status" value="1"/>
</dbReference>
<comment type="function">
    <text evidence="1">Provides the precursors necessary for DNA synthesis. Catalyzes the biosynthesis of deoxyribonucleotides from the corresponding ribonucleotides (By similarity).</text>
</comment>
<comment type="catalytic activity">
    <reaction>
        <text>a 2'-deoxyribonucleoside 5'-diphosphate + [thioredoxin]-disulfide + H2O = a ribonucleoside 5'-diphosphate + [thioredoxin]-dithiol</text>
        <dbReference type="Rhea" id="RHEA:23252"/>
        <dbReference type="Rhea" id="RHEA-COMP:10698"/>
        <dbReference type="Rhea" id="RHEA-COMP:10700"/>
        <dbReference type="ChEBI" id="CHEBI:15377"/>
        <dbReference type="ChEBI" id="CHEBI:29950"/>
        <dbReference type="ChEBI" id="CHEBI:50058"/>
        <dbReference type="ChEBI" id="CHEBI:57930"/>
        <dbReference type="ChEBI" id="CHEBI:73316"/>
        <dbReference type="EC" id="1.17.4.1"/>
    </reaction>
</comment>
<comment type="activity regulation">
    <text evidence="1">Under complex allosteric control mediated by deoxynucleoside triphosphates and ATP binding. The type of nucleotide bound at the specificity site determines substrate preference. It seems probable that ATP makes the enzyme reduce CDP and UDP, dGTP favors ADP reduction and dTTP favors GDP reduction (By similarity).</text>
</comment>
<comment type="subunit">
    <text evidence="1">Tetramer of two alpha and two beta subunits.</text>
</comment>
<comment type="induction">
    <text evidence="2">Part of the probable nrdI(ymaA)-nrdE-nrdF-ymaB operon. Expression is constitutive but low, dramatically induced by thymidine starvation which requires recA.</text>
</comment>
<comment type="disruption phenotype">
    <text evidence="2">Essential, at least the last 3 genes of the locus cannot be deleted; could be due to polar effects on downstream ymaB.</text>
</comment>
<comment type="similarity">
    <text evidence="4">Belongs to the ribonucleoside diphosphate reductase large chain family.</text>
</comment>
<reference key="1">
    <citation type="journal article" date="1996" name="Microbiology">
        <title>The Bacillus subtilis genes for ribonucleotide reductase are similar to the genes for the second class I NrdE/NrdF enzymes of Enterobacteriaceae.</title>
        <authorList>
            <person name="Scotti C."/>
            <person name="Valbuzzi A."/>
            <person name="Perego M."/>
            <person name="Galizzi A."/>
            <person name="Albertini A.M."/>
        </authorList>
    </citation>
    <scope>NUCLEOTIDE SEQUENCE [GENOMIC DNA]</scope>
    <scope>OPERON</scope>
    <scope>DISRUPTION PHENOTYPE</scope>
    <scope>MUTAGENESIS OF HIS-255</scope>
    <source>
        <strain>168</strain>
    </source>
</reference>
<reference key="2">
    <citation type="journal article" date="1997" name="Nature">
        <title>The complete genome sequence of the Gram-positive bacterium Bacillus subtilis.</title>
        <authorList>
            <person name="Kunst F."/>
            <person name="Ogasawara N."/>
            <person name="Moszer I."/>
            <person name="Albertini A.M."/>
            <person name="Alloni G."/>
            <person name="Azevedo V."/>
            <person name="Bertero M.G."/>
            <person name="Bessieres P."/>
            <person name="Bolotin A."/>
            <person name="Borchert S."/>
            <person name="Borriss R."/>
            <person name="Boursier L."/>
            <person name="Brans A."/>
            <person name="Braun M."/>
            <person name="Brignell S.C."/>
            <person name="Bron S."/>
            <person name="Brouillet S."/>
            <person name="Bruschi C.V."/>
            <person name="Caldwell B."/>
            <person name="Capuano V."/>
            <person name="Carter N.M."/>
            <person name="Choi S.-K."/>
            <person name="Codani J.-J."/>
            <person name="Connerton I.F."/>
            <person name="Cummings N.J."/>
            <person name="Daniel R.A."/>
            <person name="Denizot F."/>
            <person name="Devine K.M."/>
            <person name="Duesterhoeft A."/>
            <person name="Ehrlich S.D."/>
            <person name="Emmerson P.T."/>
            <person name="Entian K.-D."/>
            <person name="Errington J."/>
            <person name="Fabret C."/>
            <person name="Ferrari E."/>
            <person name="Foulger D."/>
            <person name="Fritz C."/>
            <person name="Fujita M."/>
            <person name="Fujita Y."/>
            <person name="Fuma S."/>
            <person name="Galizzi A."/>
            <person name="Galleron N."/>
            <person name="Ghim S.-Y."/>
            <person name="Glaser P."/>
            <person name="Goffeau A."/>
            <person name="Golightly E.J."/>
            <person name="Grandi G."/>
            <person name="Guiseppi G."/>
            <person name="Guy B.J."/>
            <person name="Haga K."/>
            <person name="Haiech J."/>
            <person name="Harwood C.R."/>
            <person name="Henaut A."/>
            <person name="Hilbert H."/>
            <person name="Holsappel S."/>
            <person name="Hosono S."/>
            <person name="Hullo M.-F."/>
            <person name="Itaya M."/>
            <person name="Jones L.-M."/>
            <person name="Joris B."/>
            <person name="Karamata D."/>
            <person name="Kasahara Y."/>
            <person name="Klaerr-Blanchard M."/>
            <person name="Klein C."/>
            <person name="Kobayashi Y."/>
            <person name="Koetter P."/>
            <person name="Koningstein G."/>
            <person name="Krogh S."/>
            <person name="Kumano M."/>
            <person name="Kurita K."/>
            <person name="Lapidus A."/>
            <person name="Lardinois S."/>
            <person name="Lauber J."/>
            <person name="Lazarevic V."/>
            <person name="Lee S.-M."/>
            <person name="Levine A."/>
            <person name="Liu H."/>
            <person name="Masuda S."/>
            <person name="Mauel C."/>
            <person name="Medigue C."/>
            <person name="Medina N."/>
            <person name="Mellado R.P."/>
            <person name="Mizuno M."/>
            <person name="Moestl D."/>
            <person name="Nakai S."/>
            <person name="Noback M."/>
            <person name="Noone D."/>
            <person name="O'Reilly M."/>
            <person name="Ogawa K."/>
            <person name="Ogiwara A."/>
            <person name="Oudega B."/>
            <person name="Park S.-H."/>
            <person name="Parro V."/>
            <person name="Pohl T.M."/>
            <person name="Portetelle D."/>
            <person name="Porwollik S."/>
            <person name="Prescott A.M."/>
            <person name="Presecan E."/>
            <person name="Pujic P."/>
            <person name="Purnelle B."/>
            <person name="Rapoport G."/>
            <person name="Rey M."/>
            <person name="Reynolds S."/>
            <person name="Rieger M."/>
            <person name="Rivolta C."/>
            <person name="Rocha E."/>
            <person name="Roche B."/>
            <person name="Rose M."/>
            <person name="Sadaie Y."/>
            <person name="Sato T."/>
            <person name="Scanlan E."/>
            <person name="Schleich S."/>
            <person name="Schroeter R."/>
            <person name="Scoffone F."/>
            <person name="Sekiguchi J."/>
            <person name="Sekowska A."/>
            <person name="Seror S.J."/>
            <person name="Serror P."/>
            <person name="Shin B.-S."/>
            <person name="Soldo B."/>
            <person name="Sorokin A."/>
            <person name="Tacconi E."/>
            <person name="Takagi T."/>
            <person name="Takahashi H."/>
            <person name="Takemaru K."/>
            <person name="Takeuchi M."/>
            <person name="Tamakoshi A."/>
            <person name="Tanaka T."/>
            <person name="Terpstra P."/>
            <person name="Tognoni A."/>
            <person name="Tosato V."/>
            <person name="Uchiyama S."/>
            <person name="Vandenbol M."/>
            <person name="Vannier F."/>
            <person name="Vassarotti A."/>
            <person name="Viari A."/>
            <person name="Wambutt R."/>
            <person name="Wedler E."/>
            <person name="Wedler H."/>
            <person name="Weitzenegger T."/>
            <person name="Winters P."/>
            <person name="Wipat A."/>
            <person name="Yamamoto H."/>
            <person name="Yamane K."/>
            <person name="Yasumoto K."/>
            <person name="Yata K."/>
            <person name="Yoshida K."/>
            <person name="Yoshikawa H.-F."/>
            <person name="Zumstein E."/>
            <person name="Yoshikawa H."/>
            <person name="Danchin A."/>
        </authorList>
    </citation>
    <scope>NUCLEOTIDE SEQUENCE [LARGE SCALE GENOMIC DNA]</scope>
    <source>
        <strain>168</strain>
    </source>
</reference>
<name>RIR1_BACSU</name>
<keyword id="KW-0002">3D-structure</keyword>
<keyword id="KW-0021">Allosteric enzyme</keyword>
<keyword id="KW-0067">ATP-binding</keyword>
<keyword id="KW-0215">Deoxyribonucleotide synthesis</keyword>
<keyword id="KW-1015">Disulfide bond</keyword>
<keyword id="KW-0547">Nucleotide-binding</keyword>
<keyword id="KW-0560">Oxidoreductase</keyword>
<keyword id="KW-1185">Reference proteome</keyword>
<protein>
    <recommendedName>
        <fullName>Ribonucleoside-diphosphate reductase subunit alpha</fullName>
        <ecNumber>1.17.4.1</ecNumber>
    </recommendedName>
    <alternativeName>
        <fullName>Ribonucleotide reductase large subunit</fullName>
    </alternativeName>
</protein>
<organism>
    <name type="scientific">Bacillus subtilis (strain 168)</name>
    <dbReference type="NCBI Taxonomy" id="224308"/>
    <lineage>
        <taxon>Bacteria</taxon>
        <taxon>Bacillati</taxon>
        <taxon>Bacillota</taxon>
        <taxon>Bacilli</taxon>
        <taxon>Bacillales</taxon>
        <taxon>Bacillaceae</taxon>
        <taxon>Bacillus</taxon>
    </lineage>
</organism>
<accession>P50620</accession>
<proteinExistence type="evidence at protein level"/>
<gene>
    <name evidence="3" type="primary">nrdE</name>
    <name type="synonym">nrdA</name>
    <name type="ordered locus">BSU17380</name>
</gene>
<feature type="chain" id="PRO_0000187209" description="Ribonucleoside-diphosphate reductase subunit alpha">
    <location>
        <begin position="1"/>
        <end position="700"/>
    </location>
</feature>
<feature type="active site" description="Proton acceptor" evidence="1">
    <location>
        <position position="380"/>
    </location>
</feature>
<feature type="active site" description="Cysteine radical intermediate" evidence="1">
    <location>
        <position position="382"/>
    </location>
</feature>
<feature type="active site" description="Proton acceptor" evidence="1">
    <location>
        <position position="384"/>
    </location>
</feature>
<feature type="binding site" evidence="1">
    <location>
        <position position="153"/>
    </location>
    <ligand>
        <name>substrate</name>
    </ligand>
</feature>
<feature type="binding site" evidence="1">
    <location>
        <begin position="169"/>
        <end position="170"/>
    </location>
    <ligand>
        <name>substrate</name>
    </ligand>
</feature>
<feature type="binding site" evidence="1">
    <location>
        <position position="198"/>
    </location>
    <ligand>
        <name>substrate</name>
    </ligand>
</feature>
<feature type="binding site" evidence="1">
    <location>
        <begin position="380"/>
        <end position="384"/>
    </location>
    <ligand>
        <name>substrate</name>
    </ligand>
</feature>
<feature type="binding site" evidence="1">
    <location>
        <begin position="580"/>
        <end position="584"/>
    </location>
    <ligand>
        <name>substrate</name>
    </ligand>
</feature>
<feature type="site" description="Important for hydrogen atom transfer" evidence="1">
    <location>
        <position position="170"/>
    </location>
</feature>
<feature type="site" description="Allosteric effector binding" evidence="1">
    <location>
        <position position="177"/>
    </location>
</feature>
<feature type="site" description="Allosteric effector binding" evidence="1">
    <location>
        <position position="207"/>
    </location>
</feature>
<feature type="site" description="Important for hydrogen atom transfer" evidence="1">
    <location>
        <position position="409"/>
    </location>
</feature>
<feature type="site" description="Important for electron transfer" evidence="1">
    <location>
        <position position="683"/>
    </location>
</feature>
<feature type="site" description="Important for electron transfer" evidence="1">
    <location>
        <position position="684"/>
    </location>
</feature>
<feature type="site" description="Interacts with thioredoxin/glutaredoxin" evidence="1">
    <location>
        <position position="695"/>
    </location>
</feature>
<feature type="site" description="Interacts with thioredoxin/glutaredoxin" evidence="1">
    <location>
        <position position="698"/>
    </location>
</feature>
<feature type="disulfide bond" description="Redox-active" evidence="1">
    <location>
        <begin position="170"/>
        <end position="409"/>
    </location>
</feature>
<feature type="mutagenesis site" description="In ts-A 73; temperature-sensitive lethal mutation." evidence="2">
    <original>H</original>
    <variation>Y</variation>
    <location>
        <position position="255"/>
    </location>
</feature>
<feature type="helix" evidence="5">
    <location>
        <begin position="8"/>
        <end position="14"/>
    </location>
</feature>
<feature type="helix" evidence="5">
    <location>
        <begin position="15"/>
        <end position="17"/>
    </location>
</feature>
<feature type="strand" evidence="7">
    <location>
        <begin position="20"/>
        <end position="23"/>
    </location>
</feature>
<feature type="helix" evidence="5">
    <location>
        <begin position="28"/>
        <end position="39"/>
    </location>
</feature>
<feature type="turn" evidence="5">
    <location>
        <begin position="40"/>
        <end position="44"/>
    </location>
</feature>
<feature type="helix" evidence="5">
    <location>
        <begin position="51"/>
        <end position="60"/>
    </location>
</feature>
<feature type="helix" evidence="5">
    <location>
        <begin position="67"/>
        <end position="70"/>
    </location>
</feature>
<feature type="helix" evidence="5">
    <location>
        <begin position="74"/>
        <end position="86"/>
    </location>
</feature>
<feature type="helix" evidence="5">
    <location>
        <begin position="94"/>
        <end position="103"/>
    </location>
</feature>
<feature type="strand" evidence="6">
    <location>
        <begin position="111"/>
        <end position="114"/>
    </location>
</feature>
<feature type="helix" evidence="5">
    <location>
        <begin position="118"/>
        <end position="130"/>
    </location>
</feature>
<feature type="helix" evidence="5">
    <location>
        <begin position="134"/>
        <end position="145"/>
    </location>
</feature>
<feature type="strand" evidence="5">
    <location>
        <begin position="148"/>
        <end position="151"/>
    </location>
</feature>
<feature type="helix" evidence="5">
    <location>
        <begin position="153"/>
        <end position="158"/>
    </location>
</feature>
<feature type="strand" evidence="6">
    <location>
        <begin position="161"/>
        <end position="163"/>
    </location>
</feature>
<feature type="strand" evidence="5">
    <location>
        <begin position="170"/>
        <end position="174"/>
    </location>
</feature>
<feature type="helix" evidence="5">
    <location>
        <begin position="179"/>
        <end position="193"/>
    </location>
</feature>
<feature type="turn" evidence="8">
    <location>
        <begin position="194"/>
        <end position="196"/>
    </location>
</feature>
<feature type="strand" evidence="5">
    <location>
        <begin position="198"/>
        <end position="202"/>
    </location>
</feature>
<feature type="strand" evidence="6">
    <location>
        <begin position="214"/>
        <end position="218"/>
    </location>
</feature>
<feature type="helix" evidence="6">
    <location>
        <begin position="219"/>
        <end position="222"/>
    </location>
</feature>
<feature type="helix" evidence="5">
    <location>
        <begin position="223"/>
        <end position="233"/>
    </location>
</feature>
<feature type="turn" evidence="8">
    <location>
        <begin position="239"/>
        <end position="241"/>
    </location>
</feature>
<feature type="strand" evidence="5">
    <location>
        <begin position="246"/>
        <end position="252"/>
    </location>
</feature>
<feature type="helix" evidence="5">
    <location>
        <begin position="258"/>
        <end position="263"/>
    </location>
</feature>
<feature type="turn" evidence="6">
    <location>
        <begin position="271"/>
        <end position="273"/>
    </location>
</feature>
<feature type="strand" evidence="5">
    <location>
        <begin position="279"/>
        <end position="284"/>
    </location>
</feature>
<feature type="helix" evidence="5">
    <location>
        <begin position="286"/>
        <end position="293"/>
    </location>
</feature>
<feature type="strand" evidence="5">
    <location>
        <begin position="298"/>
        <end position="301"/>
    </location>
</feature>
<feature type="helix" evidence="5">
    <location>
        <begin position="303"/>
        <end position="310"/>
    </location>
</feature>
<feature type="helix" evidence="5">
    <location>
        <begin position="314"/>
        <end position="316"/>
    </location>
</feature>
<feature type="helix" evidence="5">
    <location>
        <begin position="319"/>
        <end position="328"/>
    </location>
</feature>
<feature type="strand" evidence="5">
    <location>
        <begin position="334"/>
        <end position="337"/>
    </location>
</feature>
<feature type="helix" evidence="5">
    <location>
        <begin position="339"/>
        <end position="353"/>
    </location>
</feature>
<feature type="strand" evidence="5">
    <location>
        <begin position="357"/>
        <end position="360"/>
    </location>
</feature>
<feature type="helix" evidence="5">
    <location>
        <begin position="361"/>
        <end position="365"/>
    </location>
</feature>
<feature type="turn" evidence="5">
    <location>
        <begin position="369"/>
        <end position="373"/>
    </location>
</feature>
<feature type="strand" evidence="8">
    <location>
        <begin position="397"/>
        <end position="399"/>
    </location>
</feature>
<feature type="strand" evidence="5">
    <location>
        <begin position="407"/>
        <end position="415"/>
    </location>
</feature>
<feature type="helix" evidence="5">
    <location>
        <begin position="416"/>
        <end position="422"/>
    </location>
</feature>
<feature type="helix" evidence="5">
    <location>
        <begin position="425"/>
        <end position="442"/>
    </location>
</feature>
<feature type="helix" evidence="5">
    <location>
        <begin position="449"/>
        <end position="458"/>
    </location>
</feature>
<feature type="strand" evidence="5">
    <location>
        <begin position="461"/>
        <end position="466"/>
    </location>
</feature>
<feature type="helix" evidence="5">
    <location>
        <begin position="468"/>
        <end position="474"/>
    </location>
</feature>
<feature type="helix" evidence="5">
    <location>
        <begin position="482"/>
        <end position="510"/>
    </location>
</feature>
<feature type="helix" evidence="5">
    <location>
        <begin position="517"/>
        <end position="519"/>
    </location>
</feature>
<feature type="helix" evidence="5">
    <location>
        <begin position="521"/>
        <end position="524"/>
    </location>
</feature>
<feature type="helix" evidence="5">
    <location>
        <begin position="526"/>
        <end position="528"/>
    </location>
</feature>
<feature type="helix" evidence="5">
    <location>
        <begin position="529"/>
        <end position="533"/>
    </location>
</feature>
<feature type="helix" evidence="5">
    <location>
        <begin position="541"/>
        <end position="546"/>
    </location>
</feature>
<feature type="turn" evidence="5">
    <location>
        <begin position="547"/>
        <end position="549"/>
    </location>
</feature>
<feature type="helix" evidence="5">
    <location>
        <begin position="555"/>
        <end position="568"/>
    </location>
</feature>
<feature type="helix" evidence="5">
    <location>
        <begin position="584"/>
        <end position="587"/>
    </location>
</feature>
<feature type="strand" evidence="5">
    <location>
        <begin position="600"/>
        <end position="606"/>
    </location>
</feature>
<feature type="strand" evidence="5">
    <location>
        <begin position="609"/>
        <end position="614"/>
    </location>
</feature>
<feature type="helix" evidence="5">
    <location>
        <begin position="620"/>
        <end position="625"/>
    </location>
</feature>
<feature type="helix" evidence="5">
    <location>
        <begin position="629"/>
        <end position="631"/>
    </location>
</feature>
<feature type="helix" evidence="5">
    <location>
        <begin position="634"/>
        <end position="645"/>
    </location>
</feature>
<feature type="strand" evidence="5">
    <location>
        <begin position="656"/>
        <end position="658"/>
    </location>
</feature>
<feature type="helix" evidence="5">
    <location>
        <begin position="664"/>
        <end position="676"/>
    </location>
</feature>
<feature type="strand" evidence="7">
    <location>
        <begin position="681"/>
        <end position="684"/>
    </location>
</feature>
<feature type="strand" evidence="5">
    <location>
        <begin position="685"/>
        <end position="687"/>
    </location>
</feature>
<feature type="helix" evidence="7">
    <location>
        <begin position="696"/>
        <end position="698"/>
    </location>
</feature>
<sequence>MSQNQVPKWIQLNNEIMIQKDGKFQFDKDKEAVHSYFVDYINQNTVFFHNLKEKLDYLVENQYYEEEFLSLYSFEDIKEVFKTAYAKKFRFPSFMSAFKFYNDYALKTNDKKKILERYEDRISIVALFFANGDTEKAKEYVNLMINQEYQPSTPTFLNAGRKRRGELVSCFLLEVNDSLNDISRAIDISMQLSKLGGGVSLNLSKLRAKGEAIKDVENATKGVVGVMKLLDNAFRYADQMGQRQGSGAAYLNIFHRDINDFLDTKKISADEDVRVKTLSIGVVIPDKFVELAREDKAAYVFYPHTIYKEYGQHMDEMDMNEMYDKFVDNPRVKKEKINPRKLLEKLAMLRSESGYPYIMFQDNVNKVHANNHISKVKFSNLCSEVLQASQVSSYTDYDEEDEIGLDISCNLGSLNILNVMEHKSIEKTVKLATDSLTHVSETTDIRNAPAVRRANKAMKSIGLGAMNLHGYLAQNGIAYESPEARDFANTFFMMVNFYSIQRSAEIAKEKGETFDQYEGSTYATGEYFDKYVSTDFSPKYEKIANLFEGMHIPTTEDWKKLKAFVAEHGMYHSYRLCIAPTGSISYVQSSTASVMPIMERIEERTYGNSKTYYPMPGLASNNWFFYKEAYDMDMFKVVDMIATIQQHIDQGISFTLFLKDTMTTRDLNRIDLYAHHRGIKTIYYARTKDTGQDSCLSCVV</sequence>